<proteinExistence type="evidence at transcript level"/>
<protein>
    <recommendedName>
        <fullName>LIM domain-containing protein D</fullName>
    </recommendedName>
</protein>
<comment type="function">
    <text evidence="2">Binds to F-actin and may modulate the chemotactic response during early development and contribute to the maintenance of the strength of the actin cytoskeleton.</text>
</comment>
<comment type="subcellular location">
    <subcellularLocation>
        <location evidence="2">Cell projection</location>
        <location evidence="2">Pseudopodium</location>
    </subcellularLocation>
    <subcellularLocation>
        <location evidence="2">Cytoplasm</location>
        <location evidence="2">Cell cortex</location>
    </subcellularLocation>
    <subcellularLocation>
        <location evidence="2">Cytoplasm</location>
        <location evidence="2">Cytoskeleton</location>
    </subcellularLocation>
</comment>
<comment type="developmental stage">
    <text evidence="2">Expressed during the growth phase and early development. Levels start to decrease strongly after tight aggregates formation.</text>
</comment>
<comment type="disruption phenotype">
    <text evidence="2">Cells exhibit normal growth, but display altered morphology and F-actin distribution. They show changes in chemotactic motility associated with increased pseudopod formation, are significantly impaired in growth under stress conditions and highly sensitive to osmotic shock.</text>
</comment>
<evidence type="ECO:0000255" key="1">
    <source>
        <dbReference type="PROSITE-ProRule" id="PRU00125"/>
    </source>
</evidence>
<evidence type="ECO:0000269" key="2">
    <source>
    </source>
</evidence>
<organism>
    <name type="scientific">Dictyostelium discoideum</name>
    <name type="common">Social amoeba</name>
    <dbReference type="NCBI Taxonomy" id="44689"/>
    <lineage>
        <taxon>Eukaryota</taxon>
        <taxon>Amoebozoa</taxon>
        <taxon>Evosea</taxon>
        <taxon>Eumycetozoa</taxon>
        <taxon>Dictyostelia</taxon>
        <taxon>Dictyosteliales</taxon>
        <taxon>Dictyosteliaceae</taxon>
        <taxon>Dictyostelium</taxon>
    </lineage>
</organism>
<dbReference type="EMBL" id="AF348467">
    <property type="protein sequence ID" value="AAK30153.1"/>
    <property type="molecule type" value="Genomic_DNA"/>
</dbReference>
<dbReference type="EMBL" id="AAFI02000102">
    <property type="protein sequence ID" value="EAL63653.1"/>
    <property type="molecule type" value="Genomic_DNA"/>
</dbReference>
<dbReference type="RefSeq" id="XP_637163.1">
    <property type="nucleotide sequence ID" value="XM_632071.1"/>
</dbReference>
<dbReference type="SMR" id="Q9BIW4"/>
<dbReference type="FunCoup" id="Q9BIW4">
    <property type="interactions" value="692"/>
</dbReference>
<dbReference type="STRING" id="44689.Q9BIW4"/>
<dbReference type="PaxDb" id="44689-DDB0191401"/>
<dbReference type="EnsemblProtists" id="EAL63653">
    <property type="protein sequence ID" value="EAL63653"/>
    <property type="gene ID" value="DDB_G0287507"/>
</dbReference>
<dbReference type="GeneID" id="8626164"/>
<dbReference type="KEGG" id="ddi:DDB_G0287507"/>
<dbReference type="dictyBase" id="DDB_G0287507">
    <property type="gene designation" value="limD1"/>
</dbReference>
<dbReference type="VEuPathDB" id="AmoebaDB:DDB_G0287507"/>
<dbReference type="eggNOG" id="KOG1700">
    <property type="taxonomic scope" value="Eukaryota"/>
</dbReference>
<dbReference type="HOGENOM" id="CLU_1380339_0_0_1"/>
<dbReference type="InParanoid" id="Q9BIW4"/>
<dbReference type="OMA" id="CANHYPV"/>
<dbReference type="PhylomeDB" id="Q9BIW4"/>
<dbReference type="Reactome" id="R-DDI-983231">
    <property type="pathway name" value="Factors involved in megakaryocyte development and platelet production"/>
</dbReference>
<dbReference type="PRO" id="PR:Q9BIW4"/>
<dbReference type="Proteomes" id="UP000002195">
    <property type="component" value="Chromosome 5"/>
</dbReference>
<dbReference type="GO" id="GO:0015629">
    <property type="term" value="C:actin cytoskeleton"/>
    <property type="evidence" value="ECO:0000318"/>
    <property type="project" value="GO_Central"/>
</dbReference>
<dbReference type="GO" id="GO:0005938">
    <property type="term" value="C:cell cortex"/>
    <property type="evidence" value="ECO:0000314"/>
    <property type="project" value="dictyBase"/>
</dbReference>
<dbReference type="GO" id="GO:0031941">
    <property type="term" value="C:filamentous actin"/>
    <property type="evidence" value="ECO:0000314"/>
    <property type="project" value="dictyBase"/>
</dbReference>
<dbReference type="GO" id="GO:0044354">
    <property type="term" value="C:macropinosome"/>
    <property type="evidence" value="ECO:0000314"/>
    <property type="project" value="dictyBase"/>
</dbReference>
<dbReference type="GO" id="GO:0001891">
    <property type="term" value="C:phagocytic cup"/>
    <property type="evidence" value="ECO:0000314"/>
    <property type="project" value="dictyBase"/>
</dbReference>
<dbReference type="GO" id="GO:0005886">
    <property type="term" value="C:plasma membrane"/>
    <property type="evidence" value="ECO:0000318"/>
    <property type="project" value="GO_Central"/>
</dbReference>
<dbReference type="GO" id="GO:0031143">
    <property type="term" value="C:pseudopodium"/>
    <property type="evidence" value="ECO:0000314"/>
    <property type="project" value="dictyBase"/>
</dbReference>
<dbReference type="GO" id="GO:0051015">
    <property type="term" value="F:actin filament binding"/>
    <property type="evidence" value="ECO:0000314"/>
    <property type="project" value="dictyBase"/>
</dbReference>
<dbReference type="GO" id="GO:0046872">
    <property type="term" value="F:metal ion binding"/>
    <property type="evidence" value="ECO:0007669"/>
    <property type="project" value="UniProtKB-KW"/>
</dbReference>
<dbReference type="GO" id="GO:0051017">
    <property type="term" value="P:actin filament bundle assembly"/>
    <property type="evidence" value="ECO:0000318"/>
    <property type="project" value="GO_Central"/>
</dbReference>
<dbReference type="GO" id="GO:0007015">
    <property type="term" value="P:actin filament organization"/>
    <property type="evidence" value="ECO:0000315"/>
    <property type="project" value="dictyBase"/>
</dbReference>
<dbReference type="GO" id="GO:0043327">
    <property type="term" value="P:chemotaxis to cAMP"/>
    <property type="evidence" value="ECO:0000315"/>
    <property type="project" value="dictyBase"/>
</dbReference>
<dbReference type="GO" id="GO:0030866">
    <property type="term" value="P:cortical actin cytoskeleton organization"/>
    <property type="evidence" value="ECO:0000304"/>
    <property type="project" value="dictyBase"/>
</dbReference>
<dbReference type="GO" id="GO:0030010">
    <property type="term" value="P:establishment of cell polarity"/>
    <property type="evidence" value="ECO:0000315"/>
    <property type="project" value="dictyBase"/>
</dbReference>
<dbReference type="GO" id="GO:0006970">
    <property type="term" value="P:response to osmotic stress"/>
    <property type="evidence" value="ECO:0000315"/>
    <property type="project" value="dictyBase"/>
</dbReference>
<dbReference type="CDD" id="cd09358">
    <property type="entry name" value="LIM_Mical_like"/>
    <property type="match status" value="1"/>
</dbReference>
<dbReference type="Gene3D" id="2.10.110.10">
    <property type="entry name" value="Cysteine Rich Protein"/>
    <property type="match status" value="1"/>
</dbReference>
<dbReference type="InterPro" id="IPR001781">
    <property type="entry name" value="Znf_LIM"/>
</dbReference>
<dbReference type="PANTHER" id="PTHR24206">
    <property type="entry name" value="OS06G0237300 PROTEIN"/>
    <property type="match status" value="1"/>
</dbReference>
<dbReference type="Pfam" id="PF00412">
    <property type="entry name" value="LIM"/>
    <property type="match status" value="1"/>
</dbReference>
<dbReference type="SMART" id="SM00132">
    <property type="entry name" value="LIM"/>
    <property type="match status" value="1"/>
</dbReference>
<dbReference type="SUPFAM" id="SSF57716">
    <property type="entry name" value="Glucocorticoid receptor-like (DNA-binding domain)"/>
    <property type="match status" value="2"/>
</dbReference>
<dbReference type="PROSITE" id="PS00478">
    <property type="entry name" value="LIM_DOMAIN_1"/>
    <property type="match status" value="1"/>
</dbReference>
<dbReference type="PROSITE" id="PS50023">
    <property type="entry name" value="LIM_DOMAIN_2"/>
    <property type="match status" value="1"/>
</dbReference>
<accession>Q9BIW4</accession>
<accession>Q54K92</accession>
<sequence>MSNLGKCTRCQKTVYSQEGFIAVKVPFHRSCFKCEVCNWQLVLTNYKSINGKVYCANHYPVGGLSVTPEKTHTTSDDLVMKNALNAPRVETVNEQLRGGNEKPQTSTDDLVTKNALNAPKSNLVNNQVRGTSDSAPLTSADDLVTRNALKAPKSDLVNNQVRGTSEMGPQAGIDIVTANALKAPKLETMSGYQKSVQN</sequence>
<feature type="chain" id="PRO_0000328167" description="LIM domain-containing protein D">
    <location>
        <begin position="1"/>
        <end position="198"/>
    </location>
</feature>
<feature type="domain" description="LIM zinc-binding" evidence="1">
    <location>
        <begin position="5"/>
        <end position="65"/>
    </location>
</feature>
<keyword id="KW-0009">Actin-binding</keyword>
<keyword id="KW-0966">Cell projection</keyword>
<keyword id="KW-0145">Chemotaxis</keyword>
<keyword id="KW-0963">Cytoplasm</keyword>
<keyword id="KW-0206">Cytoskeleton</keyword>
<keyword id="KW-0440">LIM domain</keyword>
<keyword id="KW-0479">Metal-binding</keyword>
<keyword id="KW-1185">Reference proteome</keyword>
<keyword id="KW-0677">Repeat</keyword>
<keyword id="KW-0862">Zinc</keyword>
<reference key="1">
    <citation type="journal article" date="2002" name="EMBO J.">
        <title>Functions of LIM proteins in cell polarity and chemotactic motility.</title>
        <authorList>
            <person name="Khurana B."/>
            <person name="Khurana T."/>
            <person name="Khaire N."/>
            <person name="Noegel A.A."/>
        </authorList>
    </citation>
    <scope>NUCLEOTIDE SEQUENCE [GENOMIC DNA]</scope>
    <scope>FUNCTION</scope>
    <scope>SUBCELLULAR LOCATION</scope>
    <scope>DEVELOPMENTAL STAGE</scope>
    <scope>DISRUPTION PHENOTYPE</scope>
    <source>
        <strain>AX2</strain>
    </source>
</reference>
<reference key="2">
    <citation type="journal article" date="2005" name="Nature">
        <title>The genome of the social amoeba Dictyostelium discoideum.</title>
        <authorList>
            <person name="Eichinger L."/>
            <person name="Pachebat J.A."/>
            <person name="Gloeckner G."/>
            <person name="Rajandream M.A."/>
            <person name="Sucgang R."/>
            <person name="Berriman M."/>
            <person name="Song J."/>
            <person name="Olsen R."/>
            <person name="Szafranski K."/>
            <person name="Xu Q."/>
            <person name="Tunggal B."/>
            <person name="Kummerfeld S."/>
            <person name="Madera M."/>
            <person name="Konfortov B.A."/>
            <person name="Rivero F."/>
            <person name="Bankier A.T."/>
            <person name="Lehmann R."/>
            <person name="Hamlin N."/>
            <person name="Davies R."/>
            <person name="Gaudet P."/>
            <person name="Fey P."/>
            <person name="Pilcher K."/>
            <person name="Chen G."/>
            <person name="Saunders D."/>
            <person name="Sodergren E.J."/>
            <person name="Davis P."/>
            <person name="Kerhornou A."/>
            <person name="Nie X."/>
            <person name="Hall N."/>
            <person name="Anjard C."/>
            <person name="Hemphill L."/>
            <person name="Bason N."/>
            <person name="Farbrother P."/>
            <person name="Desany B."/>
            <person name="Just E."/>
            <person name="Morio T."/>
            <person name="Rost R."/>
            <person name="Churcher C.M."/>
            <person name="Cooper J."/>
            <person name="Haydock S."/>
            <person name="van Driessche N."/>
            <person name="Cronin A."/>
            <person name="Goodhead I."/>
            <person name="Muzny D.M."/>
            <person name="Mourier T."/>
            <person name="Pain A."/>
            <person name="Lu M."/>
            <person name="Harper D."/>
            <person name="Lindsay R."/>
            <person name="Hauser H."/>
            <person name="James K.D."/>
            <person name="Quiles M."/>
            <person name="Madan Babu M."/>
            <person name="Saito T."/>
            <person name="Buchrieser C."/>
            <person name="Wardroper A."/>
            <person name="Felder M."/>
            <person name="Thangavelu M."/>
            <person name="Johnson D."/>
            <person name="Knights A."/>
            <person name="Loulseged H."/>
            <person name="Mungall K.L."/>
            <person name="Oliver K."/>
            <person name="Price C."/>
            <person name="Quail M.A."/>
            <person name="Urushihara H."/>
            <person name="Hernandez J."/>
            <person name="Rabbinowitsch E."/>
            <person name="Steffen D."/>
            <person name="Sanders M."/>
            <person name="Ma J."/>
            <person name="Kohara Y."/>
            <person name="Sharp S."/>
            <person name="Simmonds M.N."/>
            <person name="Spiegler S."/>
            <person name="Tivey A."/>
            <person name="Sugano S."/>
            <person name="White B."/>
            <person name="Walker D."/>
            <person name="Woodward J.R."/>
            <person name="Winckler T."/>
            <person name="Tanaka Y."/>
            <person name="Shaulsky G."/>
            <person name="Schleicher M."/>
            <person name="Weinstock G.M."/>
            <person name="Rosenthal A."/>
            <person name="Cox E.C."/>
            <person name="Chisholm R.L."/>
            <person name="Gibbs R.A."/>
            <person name="Loomis W.F."/>
            <person name="Platzer M."/>
            <person name="Kay R.R."/>
            <person name="Williams J.G."/>
            <person name="Dear P.H."/>
            <person name="Noegel A.A."/>
            <person name="Barrell B.G."/>
            <person name="Kuspa A."/>
        </authorList>
    </citation>
    <scope>NUCLEOTIDE SEQUENCE [LARGE SCALE GENOMIC DNA]</scope>
    <source>
        <strain>AX4</strain>
    </source>
</reference>
<name>LIMD_DICDI</name>
<gene>
    <name type="primary">limD</name>
    <name type="synonym">limD1</name>
    <name type="ORF">DDB_G0287507</name>
</gene>